<feature type="chain" id="PRO_0000212619" description="Divalent metal cation transporter MntH">
    <location>
        <begin position="1"/>
        <end position="412"/>
    </location>
</feature>
<feature type="topological domain" description="Cytoplasmic" evidence="1">
    <location>
        <begin position="1"/>
        <end position="19"/>
    </location>
</feature>
<feature type="transmembrane region" description="Helical" evidence="1">
    <location>
        <begin position="20"/>
        <end position="39"/>
    </location>
</feature>
<feature type="topological domain" description="Periplasmic" evidence="1">
    <location>
        <begin position="40"/>
        <end position="51"/>
    </location>
</feature>
<feature type="transmembrane region" description="Helical" evidence="1">
    <location>
        <begin position="52"/>
        <end position="71"/>
    </location>
</feature>
<feature type="topological domain" description="Cytoplasmic" evidence="1">
    <location>
        <begin position="72"/>
        <end position="95"/>
    </location>
</feature>
<feature type="transmembrane region" description="Helical" evidence="1">
    <location>
        <begin position="96"/>
        <end position="118"/>
    </location>
</feature>
<feature type="topological domain" description="Periplasmic" evidence="1">
    <location>
        <begin position="119"/>
        <end position="125"/>
    </location>
</feature>
<feature type="transmembrane region" description="Helical" evidence="1">
    <location>
        <begin position="126"/>
        <end position="145"/>
    </location>
</feature>
<feature type="topological domain" description="Cytoplasmic" evidence="1">
    <location>
        <begin position="146"/>
        <end position="155"/>
    </location>
</feature>
<feature type="transmembrane region" description="Helical" evidence="1">
    <location>
        <begin position="156"/>
        <end position="175"/>
    </location>
</feature>
<feature type="topological domain" description="Periplasmic" evidence="1">
    <location>
        <begin position="176"/>
        <end position="196"/>
    </location>
</feature>
<feature type="transmembrane region" description="Helical" evidence="1">
    <location>
        <begin position="197"/>
        <end position="220"/>
    </location>
</feature>
<feature type="topological domain" description="Cytoplasmic" evidence="1">
    <location>
        <begin position="221"/>
        <end position="238"/>
    </location>
</feature>
<feature type="transmembrane region" description="Helical" evidence="1">
    <location>
        <begin position="239"/>
        <end position="258"/>
    </location>
</feature>
<feature type="topological domain" description="Periplasmic" evidence="1">
    <location>
        <begin position="259"/>
        <end position="276"/>
    </location>
</feature>
<feature type="transmembrane region" description="Helical" evidence="1">
    <location>
        <begin position="277"/>
        <end position="297"/>
    </location>
</feature>
<feature type="topological domain" description="Cytoplasmic" evidence="1">
    <location>
        <begin position="298"/>
        <end position="327"/>
    </location>
</feature>
<feature type="transmembrane region" description="Helical" evidence="1">
    <location>
        <begin position="328"/>
        <end position="344"/>
    </location>
</feature>
<feature type="topological domain" description="Periplasmic" evidence="1">
    <location>
        <begin position="345"/>
        <end position="350"/>
    </location>
</feature>
<feature type="transmembrane region" description="Helical" evidence="1">
    <location>
        <begin position="351"/>
        <end position="370"/>
    </location>
</feature>
<feature type="topological domain" description="Cytoplasmic" evidence="1">
    <location>
        <begin position="371"/>
        <end position="387"/>
    </location>
</feature>
<feature type="transmembrane region" description="Helical" evidence="1">
    <location>
        <begin position="388"/>
        <end position="406"/>
    </location>
</feature>
<feature type="topological domain" description="Periplasmic" evidence="1">
    <location>
        <begin position="407"/>
        <end position="412"/>
    </location>
</feature>
<name>MNTH_ECOL6</name>
<sequence>MTNYRVESSSGRAARKMRLALMGPAFIAAIGYIDPGNFATNIQAGASFGYQLLWVVVWANLMAMLIQILSAKLGIATGKNLAEQIRDHYPRPVVWFYWVQAEIIAMATDLAEFIGAAIGFKLILGVSLLQGAVLTGIATFLILMLQRRGQKPLEKVIGGLLLFVAAAYIVELIFSQPNLAQLGKGMVIPSLPTSEAVFLAAGVLGATIMPHVIYLHSSLTQHLHGGSRQQRYSATKWDVAIAMTIAGFVNLAMMATAAAAFHFSGHTGVADLDEAYLTLQPLLSHAAATVFGLSLVAAGLSSTVVGTLAGQVVMQGFIRFHIPLWVRRTVTMLPSFIVILMGLDPTRILVMSQVLLSFGIALALVPLLIFTSDSKLMGDLVNSKRVKQTGWVIVVLVVALNIWLLVGTALGL</sequence>
<keyword id="KW-0997">Cell inner membrane</keyword>
<keyword id="KW-1003">Cell membrane</keyword>
<keyword id="KW-0406">Ion transport</keyword>
<keyword id="KW-0472">Membrane</keyword>
<keyword id="KW-1185">Reference proteome</keyword>
<keyword id="KW-0769">Symport</keyword>
<keyword id="KW-0812">Transmembrane</keyword>
<keyword id="KW-1133">Transmembrane helix</keyword>
<keyword id="KW-0813">Transport</keyword>
<dbReference type="EMBL" id="AE014075">
    <property type="protein sequence ID" value="AAN81381.1"/>
    <property type="molecule type" value="Genomic_DNA"/>
</dbReference>
<dbReference type="RefSeq" id="WP_000186369.1">
    <property type="nucleotide sequence ID" value="NZ_CP051263.1"/>
</dbReference>
<dbReference type="SMR" id="P0A770"/>
<dbReference type="STRING" id="199310.c2931"/>
<dbReference type="KEGG" id="ecc:c2931"/>
<dbReference type="eggNOG" id="COG1914">
    <property type="taxonomic scope" value="Bacteria"/>
</dbReference>
<dbReference type="HOGENOM" id="CLU_020088_2_0_6"/>
<dbReference type="BioCyc" id="ECOL199310:C2931-MONOMER"/>
<dbReference type="Proteomes" id="UP000001410">
    <property type="component" value="Chromosome"/>
</dbReference>
<dbReference type="GO" id="GO:0005886">
    <property type="term" value="C:plasma membrane"/>
    <property type="evidence" value="ECO:0007669"/>
    <property type="project" value="UniProtKB-SubCell"/>
</dbReference>
<dbReference type="GO" id="GO:0015086">
    <property type="term" value="F:cadmium ion transmembrane transporter activity"/>
    <property type="evidence" value="ECO:0007669"/>
    <property type="project" value="TreeGrafter"/>
</dbReference>
<dbReference type="GO" id="GO:0005384">
    <property type="term" value="F:manganese ion transmembrane transporter activity"/>
    <property type="evidence" value="ECO:0007669"/>
    <property type="project" value="TreeGrafter"/>
</dbReference>
<dbReference type="GO" id="GO:0046872">
    <property type="term" value="F:metal ion binding"/>
    <property type="evidence" value="ECO:0007669"/>
    <property type="project" value="UniProtKB-UniRule"/>
</dbReference>
<dbReference type="GO" id="GO:0015293">
    <property type="term" value="F:symporter activity"/>
    <property type="evidence" value="ECO:0007669"/>
    <property type="project" value="UniProtKB-UniRule"/>
</dbReference>
<dbReference type="GO" id="GO:0034755">
    <property type="term" value="P:iron ion transmembrane transport"/>
    <property type="evidence" value="ECO:0007669"/>
    <property type="project" value="TreeGrafter"/>
</dbReference>
<dbReference type="HAMAP" id="MF_00221">
    <property type="entry name" value="NRAMP"/>
    <property type="match status" value="1"/>
</dbReference>
<dbReference type="InterPro" id="IPR001046">
    <property type="entry name" value="NRAMP_fam"/>
</dbReference>
<dbReference type="NCBIfam" id="TIGR01197">
    <property type="entry name" value="nramp"/>
    <property type="match status" value="1"/>
</dbReference>
<dbReference type="NCBIfam" id="NF037982">
    <property type="entry name" value="Nramp_1"/>
    <property type="match status" value="1"/>
</dbReference>
<dbReference type="NCBIfam" id="NF001923">
    <property type="entry name" value="PRK00701.1"/>
    <property type="match status" value="1"/>
</dbReference>
<dbReference type="PANTHER" id="PTHR11706:SF33">
    <property type="entry name" value="NATURAL RESISTANCE-ASSOCIATED MACROPHAGE PROTEIN 2"/>
    <property type="match status" value="1"/>
</dbReference>
<dbReference type="PANTHER" id="PTHR11706">
    <property type="entry name" value="SOLUTE CARRIER PROTEIN FAMILY 11 MEMBER"/>
    <property type="match status" value="1"/>
</dbReference>
<dbReference type="Pfam" id="PF01566">
    <property type="entry name" value="Nramp"/>
    <property type="match status" value="1"/>
</dbReference>
<dbReference type="PRINTS" id="PR00447">
    <property type="entry name" value="NATRESASSCMP"/>
</dbReference>
<accession>P0A770</accession>
<accession>P77145</accession>
<organism>
    <name type="scientific">Escherichia coli O6:H1 (strain CFT073 / ATCC 700928 / UPEC)</name>
    <dbReference type="NCBI Taxonomy" id="199310"/>
    <lineage>
        <taxon>Bacteria</taxon>
        <taxon>Pseudomonadati</taxon>
        <taxon>Pseudomonadota</taxon>
        <taxon>Gammaproteobacteria</taxon>
        <taxon>Enterobacterales</taxon>
        <taxon>Enterobacteriaceae</taxon>
        <taxon>Escherichia</taxon>
    </lineage>
</organism>
<comment type="function">
    <text evidence="1">H(+)-stimulated, divalent metal cation uptake system.</text>
</comment>
<comment type="subcellular location">
    <subcellularLocation>
        <location evidence="1">Cell inner membrane</location>
        <topology evidence="1">Multi-pass membrane protein</topology>
    </subcellularLocation>
</comment>
<comment type="similarity">
    <text evidence="1">Belongs to the NRAMP family.</text>
</comment>
<protein>
    <recommendedName>
        <fullName evidence="1">Divalent metal cation transporter MntH</fullName>
    </recommendedName>
</protein>
<evidence type="ECO:0000255" key="1">
    <source>
        <dbReference type="HAMAP-Rule" id="MF_00221"/>
    </source>
</evidence>
<proteinExistence type="inferred from homology"/>
<reference key="1">
    <citation type="journal article" date="2002" name="Proc. Natl. Acad. Sci. U.S.A.">
        <title>Extensive mosaic structure revealed by the complete genome sequence of uropathogenic Escherichia coli.</title>
        <authorList>
            <person name="Welch R.A."/>
            <person name="Burland V."/>
            <person name="Plunkett G. III"/>
            <person name="Redford P."/>
            <person name="Roesch P."/>
            <person name="Rasko D."/>
            <person name="Buckles E.L."/>
            <person name="Liou S.-R."/>
            <person name="Boutin A."/>
            <person name="Hackett J."/>
            <person name="Stroud D."/>
            <person name="Mayhew G.F."/>
            <person name="Rose D.J."/>
            <person name="Zhou S."/>
            <person name="Schwartz D.C."/>
            <person name="Perna N.T."/>
            <person name="Mobley H.L.T."/>
            <person name="Donnenberg M.S."/>
            <person name="Blattner F.R."/>
        </authorList>
    </citation>
    <scope>NUCLEOTIDE SEQUENCE [LARGE SCALE GENOMIC DNA]</scope>
    <source>
        <strain>CFT073 / ATCC 700928 / UPEC</strain>
    </source>
</reference>
<gene>
    <name evidence="1" type="primary">mntH</name>
    <name type="ordered locus">c2931</name>
</gene>